<dbReference type="EC" id="2.4.1.18" evidence="1"/>
<dbReference type="EMBL" id="CP000109">
    <property type="protein sequence ID" value="ABB41107.1"/>
    <property type="molecule type" value="Genomic_DNA"/>
</dbReference>
<dbReference type="SMR" id="Q31IB6"/>
<dbReference type="STRING" id="317025.Tcr_0511"/>
<dbReference type="CAZy" id="CBM48">
    <property type="family name" value="Carbohydrate-Binding Module Family 48"/>
</dbReference>
<dbReference type="CAZy" id="GH13">
    <property type="family name" value="Glycoside Hydrolase Family 13"/>
</dbReference>
<dbReference type="KEGG" id="tcx:Tcr_0511"/>
<dbReference type="eggNOG" id="COG0296">
    <property type="taxonomic scope" value="Bacteria"/>
</dbReference>
<dbReference type="HOGENOM" id="CLU_004245_3_2_6"/>
<dbReference type="OrthoDB" id="9800174at2"/>
<dbReference type="UniPathway" id="UPA00164"/>
<dbReference type="GO" id="GO:0005829">
    <property type="term" value="C:cytosol"/>
    <property type="evidence" value="ECO:0007669"/>
    <property type="project" value="TreeGrafter"/>
</dbReference>
<dbReference type="GO" id="GO:0003844">
    <property type="term" value="F:1,4-alpha-glucan branching enzyme activity"/>
    <property type="evidence" value="ECO:0007669"/>
    <property type="project" value="UniProtKB-UniRule"/>
</dbReference>
<dbReference type="GO" id="GO:0043169">
    <property type="term" value="F:cation binding"/>
    <property type="evidence" value="ECO:0007669"/>
    <property type="project" value="InterPro"/>
</dbReference>
<dbReference type="GO" id="GO:0004553">
    <property type="term" value="F:hydrolase activity, hydrolyzing O-glycosyl compounds"/>
    <property type="evidence" value="ECO:0007669"/>
    <property type="project" value="InterPro"/>
</dbReference>
<dbReference type="GO" id="GO:0005978">
    <property type="term" value="P:glycogen biosynthetic process"/>
    <property type="evidence" value="ECO:0007669"/>
    <property type="project" value="UniProtKB-UniRule"/>
</dbReference>
<dbReference type="CDD" id="cd11322">
    <property type="entry name" value="AmyAc_Glg_BE"/>
    <property type="match status" value="1"/>
</dbReference>
<dbReference type="CDD" id="cd02855">
    <property type="entry name" value="E_set_GBE_prok_N"/>
    <property type="match status" value="1"/>
</dbReference>
<dbReference type="FunFam" id="2.60.40.10:FF:000169">
    <property type="entry name" value="1,4-alpha-glucan branching enzyme GlgB"/>
    <property type="match status" value="1"/>
</dbReference>
<dbReference type="FunFam" id="2.60.40.1180:FF:000002">
    <property type="entry name" value="1,4-alpha-glucan branching enzyme GlgB"/>
    <property type="match status" value="1"/>
</dbReference>
<dbReference type="FunFam" id="3.20.20.80:FF:000003">
    <property type="entry name" value="1,4-alpha-glucan branching enzyme GlgB"/>
    <property type="match status" value="1"/>
</dbReference>
<dbReference type="Gene3D" id="3.20.20.80">
    <property type="entry name" value="Glycosidases"/>
    <property type="match status" value="1"/>
</dbReference>
<dbReference type="Gene3D" id="2.60.40.1180">
    <property type="entry name" value="Golgi alpha-mannosidase II"/>
    <property type="match status" value="1"/>
</dbReference>
<dbReference type="Gene3D" id="2.60.40.10">
    <property type="entry name" value="Immunoglobulins"/>
    <property type="match status" value="2"/>
</dbReference>
<dbReference type="HAMAP" id="MF_00685">
    <property type="entry name" value="GlgB"/>
    <property type="match status" value="1"/>
</dbReference>
<dbReference type="InterPro" id="IPR006048">
    <property type="entry name" value="A-amylase/branching_C"/>
</dbReference>
<dbReference type="InterPro" id="IPR037439">
    <property type="entry name" value="Branching_enzy"/>
</dbReference>
<dbReference type="InterPro" id="IPR006407">
    <property type="entry name" value="GlgB"/>
</dbReference>
<dbReference type="InterPro" id="IPR054169">
    <property type="entry name" value="GlgB_N"/>
</dbReference>
<dbReference type="InterPro" id="IPR044143">
    <property type="entry name" value="GlgB_N_E_set_prok"/>
</dbReference>
<dbReference type="InterPro" id="IPR006047">
    <property type="entry name" value="Glyco_hydro_13_cat_dom"/>
</dbReference>
<dbReference type="InterPro" id="IPR004193">
    <property type="entry name" value="Glyco_hydro_13_N"/>
</dbReference>
<dbReference type="InterPro" id="IPR013780">
    <property type="entry name" value="Glyco_hydro_b"/>
</dbReference>
<dbReference type="InterPro" id="IPR017853">
    <property type="entry name" value="Glycoside_hydrolase_SF"/>
</dbReference>
<dbReference type="InterPro" id="IPR013783">
    <property type="entry name" value="Ig-like_fold"/>
</dbReference>
<dbReference type="InterPro" id="IPR014756">
    <property type="entry name" value="Ig_E-set"/>
</dbReference>
<dbReference type="NCBIfam" id="TIGR01515">
    <property type="entry name" value="branching_enzym"/>
    <property type="match status" value="1"/>
</dbReference>
<dbReference type="NCBIfam" id="NF003811">
    <property type="entry name" value="PRK05402.1"/>
    <property type="match status" value="1"/>
</dbReference>
<dbReference type="NCBIfam" id="NF008967">
    <property type="entry name" value="PRK12313.1"/>
    <property type="match status" value="1"/>
</dbReference>
<dbReference type="PANTHER" id="PTHR43651">
    <property type="entry name" value="1,4-ALPHA-GLUCAN-BRANCHING ENZYME"/>
    <property type="match status" value="1"/>
</dbReference>
<dbReference type="PANTHER" id="PTHR43651:SF3">
    <property type="entry name" value="1,4-ALPHA-GLUCAN-BRANCHING ENZYME"/>
    <property type="match status" value="1"/>
</dbReference>
<dbReference type="Pfam" id="PF00128">
    <property type="entry name" value="Alpha-amylase"/>
    <property type="match status" value="2"/>
</dbReference>
<dbReference type="Pfam" id="PF02806">
    <property type="entry name" value="Alpha-amylase_C"/>
    <property type="match status" value="1"/>
</dbReference>
<dbReference type="Pfam" id="PF02922">
    <property type="entry name" value="CBM_48"/>
    <property type="match status" value="1"/>
</dbReference>
<dbReference type="Pfam" id="PF22019">
    <property type="entry name" value="GlgB_N"/>
    <property type="match status" value="1"/>
</dbReference>
<dbReference type="PIRSF" id="PIRSF000463">
    <property type="entry name" value="GlgB"/>
    <property type="match status" value="1"/>
</dbReference>
<dbReference type="SMART" id="SM00642">
    <property type="entry name" value="Aamy"/>
    <property type="match status" value="1"/>
</dbReference>
<dbReference type="SUPFAM" id="SSF51445">
    <property type="entry name" value="(Trans)glycosidases"/>
    <property type="match status" value="1"/>
</dbReference>
<dbReference type="SUPFAM" id="SSF81296">
    <property type="entry name" value="E set domains"/>
    <property type="match status" value="2"/>
</dbReference>
<dbReference type="SUPFAM" id="SSF51011">
    <property type="entry name" value="Glycosyl hydrolase domain"/>
    <property type="match status" value="1"/>
</dbReference>
<reference key="1">
    <citation type="journal article" date="2006" name="PLoS Biol.">
        <title>The genome of deep-sea vent chemolithoautotroph Thiomicrospira crunogena XCL-2.</title>
        <authorList>
            <person name="Scott K.M."/>
            <person name="Sievert S.M."/>
            <person name="Abril F.N."/>
            <person name="Ball L.A."/>
            <person name="Barrett C.J."/>
            <person name="Blake R.A."/>
            <person name="Boller A.J."/>
            <person name="Chain P.S.G."/>
            <person name="Clark J.A."/>
            <person name="Davis C.R."/>
            <person name="Detter C."/>
            <person name="Do K.F."/>
            <person name="Dobrinski K.P."/>
            <person name="Faza B.I."/>
            <person name="Fitzpatrick K.A."/>
            <person name="Freyermuth S.K."/>
            <person name="Harmer T.L."/>
            <person name="Hauser L.J."/>
            <person name="Huegler M."/>
            <person name="Kerfeld C.A."/>
            <person name="Klotz M.G."/>
            <person name="Kong W.W."/>
            <person name="Land M."/>
            <person name="Lapidus A."/>
            <person name="Larimer F.W."/>
            <person name="Longo D.L."/>
            <person name="Lucas S."/>
            <person name="Malfatti S.A."/>
            <person name="Massey S.E."/>
            <person name="Martin D.D."/>
            <person name="McCuddin Z."/>
            <person name="Meyer F."/>
            <person name="Moore J.L."/>
            <person name="Ocampo L.H. Jr."/>
            <person name="Paul J.H."/>
            <person name="Paulsen I.T."/>
            <person name="Reep D.K."/>
            <person name="Ren Q."/>
            <person name="Ross R.L."/>
            <person name="Sato P.Y."/>
            <person name="Thomas P."/>
            <person name="Tinkham L.E."/>
            <person name="Zeruth G.T."/>
        </authorList>
    </citation>
    <scope>NUCLEOTIDE SEQUENCE [LARGE SCALE GENOMIC DNA]</scope>
    <source>
        <strain>DSM 25203 / XCL-2</strain>
    </source>
</reference>
<comment type="function">
    <text evidence="1">Catalyzes the formation of the alpha-1,6-glucosidic linkages in glycogen by scission of a 1,4-alpha-linked oligosaccharide from growing alpha-1,4-glucan chains and the subsequent attachment of the oligosaccharide to the alpha-1,6 position.</text>
</comment>
<comment type="catalytic activity">
    <reaction evidence="1">
        <text>Transfers a segment of a (1-&gt;4)-alpha-D-glucan chain to a primary hydroxy group in a similar glucan chain.</text>
        <dbReference type="EC" id="2.4.1.18"/>
    </reaction>
</comment>
<comment type="pathway">
    <text evidence="1">Glycan biosynthesis; glycogen biosynthesis.</text>
</comment>
<comment type="subunit">
    <text evidence="1">Monomer.</text>
</comment>
<comment type="similarity">
    <text evidence="1">Belongs to the glycosyl hydrolase 13 family. GlgB subfamily.</text>
</comment>
<gene>
    <name evidence="1" type="primary">glgB</name>
    <name type="ordered locus">Tcr_0511</name>
</gene>
<proteinExistence type="inferred from homology"/>
<protein>
    <recommendedName>
        <fullName evidence="1">1,4-alpha-glucan branching enzyme GlgB</fullName>
        <ecNumber evidence="1">2.4.1.18</ecNumber>
    </recommendedName>
    <alternativeName>
        <fullName evidence="1">1,4-alpha-D-glucan:1,4-alpha-D-glucan 6-glucosyl-transferase</fullName>
    </alternativeName>
    <alternativeName>
        <fullName evidence="1">Alpha-(1-&gt;4)-glucan branching enzyme</fullName>
    </alternativeName>
    <alternativeName>
        <fullName evidence="1">Glycogen branching enzyme</fullName>
        <shortName evidence="1">BE</shortName>
    </alternativeName>
</protein>
<organism>
    <name type="scientific">Hydrogenovibrio crunogenus (strain DSM 25203 / XCL-2)</name>
    <name type="common">Thiomicrospira crunogena</name>
    <dbReference type="NCBI Taxonomy" id="317025"/>
    <lineage>
        <taxon>Bacteria</taxon>
        <taxon>Pseudomonadati</taxon>
        <taxon>Pseudomonadota</taxon>
        <taxon>Gammaproteobacteria</taxon>
        <taxon>Thiotrichales</taxon>
        <taxon>Piscirickettsiaceae</taxon>
        <taxon>Hydrogenovibrio</taxon>
    </lineage>
</organism>
<name>GLGB_HYDCU</name>
<feature type="chain" id="PRO_0000260712" description="1,4-alpha-glucan branching enzyme GlgB">
    <location>
        <begin position="1"/>
        <end position="726"/>
    </location>
</feature>
<feature type="active site" description="Nucleophile" evidence="1">
    <location>
        <position position="407"/>
    </location>
</feature>
<feature type="active site" description="Proton donor" evidence="1">
    <location>
        <position position="460"/>
    </location>
</feature>
<evidence type="ECO:0000255" key="1">
    <source>
        <dbReference type="HAMAP-Rule" id="MF_00685"/>
    </source>
</evidence>
<keyword id="KW-0119">Carbohydrate metabolism</keyword>
<keyword id="KW-0320">Glycogen biosynthesis</keyword>
<keyword id="KW-0321">Glycogen metabolism</keyword>
<keyword id="KW-0328">Glycosyltransferase</keyword>
<keyword id="KW-0808">Transferase</keyword>
<sequence>MMNQTVTEEAVRRLAEGTHHDPFQILGCHAVGKKWEVRVWLPTAESASVEGWHALTRVEGTSLFIASLTEKQKKALPLHFKVNWVEANGSEHTVVSPYTFLPQLGELDLHLYAEGRHWHVYDVLGAQVKEVDNISGVQFSVWAPAASRVSVVGDFNGWNGLRHPMRTNGQSGVWELFIPGMVSGDIYKFEIRNYQTDQLLVKTDPYAKAMEFRPQTGSIVYDSTFQWQDRDWLAARAHFDWQASPINIYEVHLGSWQRDHDGFFLNYKEIAQRLVEYVKWMGYTHIELLPISEHPLDESWGYQTTGYFSPTSRFGSPDDFRYFVNYCHENGIGVFLDWVPAHFPKDEFALARFDGTALYEHEDPRRGEHQDWGTYIFNYGRNEVRNFLIANALYWLKELHIDGLRVDAVASMLYLDYSRKDGDWLPNQYGGRENIEAIEFLKTLNAEVHAQCPGALMMAEESTSWPMVSRPTWMGGLGFSMKWNMGWMNDTLDFFQQDPIYRPYHHNQLTFSQMYAYSENFILPLSHDEVVHMKHALVSKMPGDTWQKMANMRLLMGYQTLNPGKKLLFMGGEFAQWQEWSESRGLDWYLCEQPANRGVQMLVRDLNLLYQTSPALYCHDFDQEGFEWIDCHDYEQSVLSFVRISEKESLICVFNFTPVPRYDYRIGLPETGIYEEVLNSDSELYGGGNVGNSGQLTTEDQRWMNRPCSTTLVLPPLAVVVLRKKS</sequence>
<accession>Q31IB6</accession>